<evidence type="ECO:0000250" key="1"/>
<evidence type="ECO:0000255" key="2"/>
<evidence type="ECO:0000255" key="3">
    <source>
        <dbReference type="PROSITE-ProRule" id="PRU00043"/>
    </source>
</evidence>
<dbReference type="RefSeq" id="NP_001013026.1">
    <property type="nucleotide sequence ID" value="NM_001013008.3"/>
</dbReference>
<dbReference type="SMR" id="Q5DRD1"/>
<dbReference type="FunCoup" id="Q5DRD1">
    <property type="interactions" value="78"/>
</dbReference>
<dbReference type="GlyCosmos" id="Q5DRD1">
    <property type="glycosylation" value="4 sites, No reported glycans"/>
</dbReference>
<dbReference type="PaxDb" id="9598-ENSPTRP00000029632"/>
<dbReference type="GeneID" id="462128"/>
<dbReference type="KEGG" id="ptr:462128"/>
<dbReference type="CTD" id="56132"/>
<dbReference type="eggNOG" id="KOG3594">
    <property type="taxonomic scope" value="Eukaryota"/>
</dbReference>
<dbReference type="HOGENOM" id="CLU_006480_3_0_1"/>
<dbReference type="InParanoid" id="Q5DRD1"/>
<dbReference type="OrthoDB" id="8007at9604"/>
<dbReference type="TreeFam" id="TF332299"/>
<dbReference type="Proteomes" id="UP000002277">
    <property type="component" value="Unplaced"/>
</dbReference>
<dbReference type="GO" id="GO:0005886">
    <property type="term" value="C:plasma membrane"/>
    <property type="evidence" value="ECO:0000318"/>
    <property type="project" value="GO_Central"/>
</dbReference>
<dbReference type="GO" id="GO:0005509">
    <property type="term" value="F:calcium ion binding"/>
    <property type="evidence" value="ECO:0007669"/>
    <property type="project" value="InterPro"/>
</dbReference>
<dbReference type="GO" id="GO:0007155">
    <property type="term" value="P:cell adhesion"/>
    <property type="evidence" value="ECO:0000318"/>
    <property type="project" value="GO_Central"/>
</dbReference>
<dbReference type="GO" id="GO:0007156">
    <property type="term" value="P:homophilic cell adhesion via plasma membrane adhesion molecules"/>
    <property type="evidence" value="ECO:0007669"/>
    <property type="project" value="InterPro"/>
</dbReference>
<dbReference type="GO" id="GO:0007399">
    <property type="term" value="P:nervous system development"/>
    <property type="evidence" value="ECO:0007669"/>
    <property type="project" value="UniProtKB-ARBA"/>
</dbReference>
<dbReference type="CDD" id="cd11304">
    <property type="entry name" value="Cadherin_repeat"/>
    <property type="match status" value="5"/>
</dbReference>
<dbReference type="FunFam" id="2.60.40.60:FF:000001">
    <property type="entry name" value="Protocadherin alpha 2"/>
    <property type="match status" value="1"/>
</dbReference>
<dbReference type="FunFam" id="2.60.40.60:FF:000002">
    <property type="entry name" value="Protocadherin alpha 2"/>
    <property type="match status" value="1"/>
</dbReference>
<dbReference type="FunFam" id="2.60.40.60:FF:000006">
    <property type="entry name" value="Protocadherin alpha 2"/>
    <property type="match status" value="1"/>
</dbReference>
<dbReference type="FunFam" id="2.60.40.60:FF:000046">
    <property type="entry name" value="Protocadherin beta 5"/>
    <property type="match status" value="1"/>
</dbReference>
<dbReference type="FunFam" id="2.60.40.60:FF:000309">
    <property type="entry name" value="Protocadherin beta-8"/>
    <property type="match status" value="1"/>
</dbReference>
<dbReference type="FunFam" id="2.60.40.60:FF:000018">
    <property type="entry name" value="Protocadherin gamma c3"/>
    <property type="match status" value="1"/>
</dbReference>
<dbReference type="Gene3D" id="2.60.40.60">
    <property type="entry name" value="Cadherins"/>
    <property type="match status" value="6"/>
</dbReference>
<dbReference type="InterPro" id="IPR002126">
    <property type="entry name" value="Cadherin-like_dom"/>
</dbReference>
<dbReference type="InterPro" id="IPR015919">
    <property type="entry name" value="Cadherin-like_sf"/>
</dbReference>
<dbReference type="InterPro" id="IPR032455">
    <property type="entry name" value="Cadherin_C"/>
</dbReference>
<dbReference type="InterPro" id="IPR020894">
    <property type="entry name" value="Cadherin_CS"/>
</dbReference>
<dbReference type="InterPro" id="IPR013164">
    <property type="entry name" value="Cadherin_N"/>
</dbReference>
<dbReference type="InterPro" id="IPR050174">
    <property type="entry name" value="Protocadherin/Cadherin-CA"/>
</dbReference>
<dbReference type="PANTHER" id="PTHR24028">
    <property type="entry name" value="CADHERIN-87A"/>
    <property type="match status" value="1"/>
</dbReference>
<dbReference type="PANTHER" id="PTHR24028:SF302">
    <property type="entry name" value="PROTOCADHERIN BETA-3"/>
    <property type="match status" value="1"/>
</dbReference>
<dbReference type="Pfam" id="PF00028">
    <property type="entry name" value="Cadherin"/>
    <property type="match status" value="5"/>
</dbReference>
<dbReference type="Pfam" id="PF08266">
    <property type="entry name" value="Cadherin_2"/>
    <property type="match status" value="1"/>
</dbReference>
<dbReference type="Pfam" id="PF16492">
    <property type="entry name" value="Cadherin_C_2"/>
    <property type="match status" value="1"/>
</dbReference>
<dbReference type="PRINTS" id="PR00205">
    <property type="entry name" value="CADHERIN"/>
</dbReference>
<dbReference type="SMART" id="SM00112">
    <property type="entry name" value="CA"/>
    <property type="match status" value="6"/>
</dbReference>
<dbReference type="SUPFAM" id="SSF49313">
    <property type="entry name" value="Cadherin-like"/>
    <property type="match status" value="6"/>
</dbReference>
<dbReference type="PROSITE" id="PS00232">
    <property type="entry name" value="CADHERIN_1"/>
    <property type="match status" value="5"/>
</dbReference>
<dbReference type="PROSITE" id="PS50268">
    <property type="entry name" value="CADHERIN_2"/>
    <property type="match status" value="6"/>
</dbReference>
<keyword id="KW-0106">Calcium</keyword>
<keyword id="KW-0130">Cell adhesion</keyword>
<keyword id="KW-1003">Cell membrane</keyword>
<keyword id="KW-0325">Glycoprotein</keyword>
<keyword id="KW-0472">Membrane</keyword>
<keyword id="KW-1185">Reference proteome</keyword>
<keyword id="KW-0677">Repeat</keyword>
<keyword id="KW-0732">Signal</keyword>
<keyword id="KW-0812">Transmembrane</keyword>
<keyword id="KW-1133">Transmembrane helix</keyword>
<sequence length="796" mass="86773">MEAGGERFLRQRQVLLLFVFLGGSLAGSESRRYSVAEEKERGFLIANLAKDLGLRVEELAARGAQVVSKGNKQHFQLSHQTGDLLLNEKLDREELCGPTEPCILHFQILLQNPLQFVTNELRIIDVNDHSPVFFENEMHLKILESTLPGTVIPLGNAEDLDVGRNSLQNYTITPNSHFHVLTRSRRDGRKYPELVLDKALDREEQPELSLTLTALDGGSPPRSGTAQINIQVLDINDNAPEFAQPLYEVAVLENTPVYSVIVTVSASDLDTGSFGTISYAFFHASEEIRKTFQLNPITGDMQLVKYLNFEAINSYEVDIEAKDGGGLSGKSTVIVQVVDVNDNPPELTLSSVNSPIPENSGETVLAVFSVSDLDSGDNGRVMCSIENNLPFFLKPSVENFYTLVSEGALDRETRSEYNITITITDLGTPRLKTKYNITVLVSDVNDNAPAFTQTSYTLFVRENNSPALHIGSVSATDRDSGTNAQVTYSLLPPQDPHLPLSSLVSINADNGHLFALRSLDYEALQAFEFRVGATDRGSPALSSEALVRVLVLDANDNSPFVLYPLQNGSAPCTELVPRAAEPGYLVTKVVAVDGDSGQNAWLSYQLLKATEPGLFGVWAHNGEVRTARLLSERDAAKHKLAVLVKDNGEPPRSATATLHVLLVDGFSQPYLPLPEAAPAQAQADLLTVYLVVALASVSSLFLFSVLLFVAVRLCRRSRAASVGRCSVPEGPFPGHLVDVSGTGTLSQSYQYEVCLTGGSGTNEFKFLKPIIPNFVAQGAERVSEANPSFRKSFEFS</sequence>
<organism>
    <name type="scientific">Pan troglodytes</name>
    <name type="common">Chimpanzee</name>
    <dbReference type="NCBI Taxonomy" id="9598"/>
    <lineage>
        <taxon>Eukaryota</taxon>
        <taxon>Metazoa</taxon>
        <taxon>Chordata</taxon>
        <taxon>Craniata</taxon>
        <taxon>Vertebrata</taxon>
        <taxon>Euteleostomi</taxon>
        <taxon>Mammalia</taxon>
        <taxon>Eutheria</taxon>
        <taxon>Euarchontoglires</taxon>
        <taxon>Primates</taxon>
        <taxon>Haplorrhini</taxon>
        <taxon>Catarrhini</taxon>
        <taxon>Hominidae</taxon>
        <taxon>Pan</taxon>
    </lineage>
</organism>
<gene>
    <name type="primary">PCDHB3</name>
</gene>
<reference key="1">
    <citation type="journal article" date="2005" name="Nature">
        <title>Initial sequence of the chimpanzee genome and comparison with the human genome.</title>
        <authorList>
            <consortium name="Chimpanzee sequencing and analysis consortium"/>
        </authorList>
    </citation>
    <scope>NUCLEOTIDE SEQUENCE [LARGE SCALE GENOMIC DNA]</scope>
</reference>
<reference key="2">
    <citation type="journal article" date="2005" name="Genetics">
        <title>Comparative genomics and diversifying selection of the clustered vertebrate protocadherin genes.</title>
        <authorList>
            <person name="Wu Q."/>
        </authorList>
    </citation>
    <scope>IDENTIFICATION</scope>
</reference>
<proteinExistence type="inferred from homology"/>
<comment type="function">
    <text>Potential calcium-dependent cell-adhesion protein. May be involved in the establishment and maintenance of specific neuronal connections in the brain.</text>
</comment>
<comment type="subcellular location">
    <subcellularLocation>
        <location evidence="1">Cell membrane</location>
        <topology evidence="1">Single-pass type I membrane protein</topology>
    </subcellularLocation>
</comment>
<feature type="signal peptide" evidence="2">
    <location>
        <begin position="1"/>
        <end position="26"/>
    </location>
</feature>
<feature type="chain" id="PRO_0000003919" description="Protocadherin beta-3">
    <location>
        <begin position="27"/>
        <end position="796"/>
    </location>
</feature>
<feature type="topological domain" description="Extracellular" evidence="2">
    <location>
        <begin position="27"/>
        <end position="690"/>
    </location>
</feature>
<feature type="transmembrane region" description="Helical" evidence="2">
    <location>
        <begin position="691"/>
        <end position="711"/>
    </location>
</feature>
<feature type="topological domain" description="Cytoplasmic" evidence="2">
    <location>
        <begin position="712"/>
        <end position="796"/>
    </location>
</feature>
<feature type="domain" description="Cadherin 1" evidence="3">
    <location>
        <begin position="35"/>
        <end position="133"/>
    </location>
</feature>
<feature type="domain" description="Cadherin 2" evidence="3">
    <location>
        <begin position="138"/>
        <end position="242"/>
    </location>
</feature>
<feature type="domain" description="Cadherin 3" evidence="3">
    <location>
        <begin position="247"/>
        <end position="347"/>
    </location>
</feature>
<feature type="domain" description="Cadherin 4" evidence="3">
    <location>
        <begin position="352"/>
        <end position="451"/>
    </location>
</feature>
<feature type="domain" description="Cadherin 5" evidence="3">
    <location>
        <begin position="456"/>
        <end position="561"/>
    </location>
</feature>
<feature type="domain" description="Cadherin 6" evidence="3">
    <location>
        <begin position="568"/>
        <end position="671"/>
    </location>
</feature>
<feature type="glycosylation site" description="N-linked (GlcNAc...) asparagine" evidence="2">
    <location>
        <position position="169"/>
    </location>
</feature>
<feature type="glycosylation site" description="N-linked (GlcNAc...) asparagine" evidence="2">
    <location>
        <position position="418"/>
    </location>
</feature>
<feature type="glycosylation site" description="N-linked (GlcNAc...) asparagine" evidence="2">
    <location>
        <position position="436"/>
    </location>
</feature>
<feature type="glycosylation site" description="N-linked (GlcNAc...) asparagine" evidence="2">
    <location>
        <position position="567"/>
    </location>
</feature>
<accession>Q5DRD1</accession>
<protein>
    <recommendedName>
        <fullName>Protocadherin beta-3</fullName>
        <shortName>PCDH-beta-3</shortName>
    </recommendedName>
</protein>
<name>PCDB3_PANTR</name>